<proteinExistence type="inferred from homology"/>
<feature type="chain" id="PRO_0000392407" description="Fe-S cluster assembly protein dre2">
    <location>
        <begin position="1"/>
        <end position="309"/>
    </location>
</feature>
<feature type="region of interest" description="N-terminal SAM-like domain" evidence="1">
    <location>
        <begin position="1"/>
        <end position="132"/>
    </location>
</feature>
<feature type="region of interest" description="Linker" evidence="1">
    <location>
        <begin position="133"/>
        <end position="195"/>
    </location>
</feature>
<feature type="region of interest" description="Fe-S binding site A" evidence="1">
    <location>
        <begin position="207"/>
        <end position="221"/>
    </location>
</feature>
<feature type="region of interest" description="Fe-S binding site B" evidence="1">
    <location>
        <begin position="265"/>
        <end position="279"/>
    </location>
</feature>
<feature type="short sequence motif" description="Cx2C motif 1" evidence="1">
    <location>
        <begin position="265"/>
        <end position="268"/>
    </location>
</feature>
<feature type="short sequence motif" description="Cx2C motif 2" evidence="1">
    <location>
        <begin position="276"/>
        <end position="279"/>
    </location>
</feature>
<feature type="binding site" evidence="1">
    <location>
        <position position="207"/>
    </location>
    <ligand>
        <name>[2Fe-2S] cluster</name>
        <dbReference type="ChEBI" id="CHEBI:190135"/>
    </ligand>
</feature>
<feature type="binding site" evidence="1">
    <location>
        <position position="216"/>
    </location>
    <ligand>
        <name>[2Fe-2S] cluster</name>
        <dbReference type="ChEBI" id="CHEBI:190135"/>
    </ligand>
</feature>
<feature type="binding site" evidence="1">
    <location>
        <position position="219"/>
    </location>
    <ligand>
        <name>[2Fe-2S] cluster</name>
        <dbReference type="ChEBI" id="CHEBI:190135"/>
    </ligand>
</feature>
<feature type="binding site" evidence="1">
    <location>
        <position position="221"/>
    </location>
    <ligand>
        <name>[2Fe-2S] cluster</name>
        <dbReference type="ChEBI" id="CHEBI:190135"/>
    </ligand>
</feature>
<feature type="binding site" evidence="1">
    <location>
        <position position="265"/>
    </location>
    <ligand>
        <name>[4Fe-4S] cluster</name>
        <dbReference type="ChEBI" id="CHEBI:49883"/>
    </ligand>
</feature>
<feature type="binding site" evidence="1">
    <location>
        <position position="268"/>
    </location>
    <ligand>
        <name>[4Fe-4S] cluster</name>
        <dbReference type="ChEBI" id="CHEBI:49883"/>
    </ligand>
</feature>
<feature type="binding site" evidence="1">
    <location>
        <position position="276"/>
    </location>
    <ligand>
        <name>[4Fe-4S] cluster</name>
        <dbReference type="ChEBI" id="CHEBI:49883"/>
    </ligand>
</feature>
<feature type="binding site" evidence="1">
    <location>
        <position position="279"/>
    </location>
    <ligand>
        <name>[4Fe-4S] cluster</name>
        <dbReference type="ChEBI" id="CHEBI:49883"/>
    </ligand>
</feature>
<name>DRE2_SCHJY</name>
<organism>
    <name type="scientific">Schizosaccharomyces japonicus (strain yFS275 / FY16936)</name>
    <name type="common">Fission yeast</name>
    <dbReference type="NCBI Taxonomy" id="402676"/>
    <lineage>
        <taxon>Eukaryota</taxon>
        <taxon>Fungi</taxon>
        <taxon>Dikarya</taxon>
        <taxon>Ascomycota</taxon>
        <taxon>Taphrinomycotina</taxon>
        <taxon>Schizosaccharomycetes</taxon>
        <taxon>Schizosaccharomycetales</taxon>
        <taxon>Schizosaccharomycetaceae</taxon>
        <taxon>Schizosaccharomyces</taxon>
    </lineage>
</organism>
<gene>
    <name evidence="1" type="primary">dre2</name>
    <name type="ORF">SJAG_00455</name>
</gene>
<reference key="1">
    <citation type="journal article" date="2011" name="Science">
        <title>Comparative functional genomics of the fission yeasts.</title>
        <authorList>
            <person name="Rhind N."/>
            <person name="Chen Z."/>
            <person name="Yassour M."/>
            <person name="Thompson D.A."/>
            <person name="Haas B.J."/>
            <person name="Habib N."/>
            <person name="Wapinski I."/>
            <person name="Roy S."/>
            <person name="Lin M.F."/>
            <person name="Heiman D.I."/>
            <person name="Young S.K."/>
            <person name="Furuya K."/>
            <person name="Guo Y."/>
            <person name="Pidoux A."/>
            <person name="Chen H.M."/>
            <person name="Robbertse B."/>
            <person name="Goldberg J.M."/>
            <person name="Aoki K."/>
            <person name="Bayne E.H."/>
            <person name="Berlin A.M."/>
            <person name="Desjardins C.A."/>
            <person name="Dobbs E."/>
            <person name="Dukaj L."/>
            <person name="Fan L."/>
            <person name="FitzGerald M.G."/>
            <person name="French C."/>
            <person name="Gujja S."/>
            <person name="Hansen K."/>
            <person name="Keifenheim D."/>
            <person name="Levin J.Z."/>
            <person name="Mosher R.A."/>
            <person name="Mueller C.A."/>
            <person name="Pfiffner J."/>
            <person name="Priest M."/>
            <person name="Russ C."/>
            <person name="Smialowska A."/>
            <person name="Swoboda P."/>
            <person name="Sykes S.M."/>
            <person name="Vaughn M."/>
            <person name="Vengrova S."/>
            <person name="Yoder R."/>
            <person name="Zeng Q."/>
            <person name="Allshire R."/>
            <person name="Baulcombe D."/>
            <person name="Birren B.W."/>
            <person name="Brown W."/>
            <person name="Ekwall K."/>
            <person name="Kellis M."/>
            <person name="Leatherwood J."/>
            <person name="Levin H."/>
            <person name="Margalit H."/>
            <person name="Martienssen R."/>
            <person name="Nieduszynski C.A."/>
            <person name="Spatafora J.W."/>
            <person name="Friedman N."/>
            <person name="Dalgaard J.Z."/>
            <person name="Baumann P."/>
            <person name="Niki H."/>
            <person name="Regev A."/>
            <person name="Nusbaum C."/>
        </authorList>
    </citation>
    <scope>NUCLEOTIDE SEQUENCE [LARGE SCALE GENOMIC DNA]</scope>
    <source>
        <strain>yFS275 / FY16936</strain>
    </source>
</reference>
<evidence type="ECO:0000255" key="1">
    <source>
        <dbReference type="HAMAP-Rule" id="MF_03115"/>
    </source>
</evidence>
<accession>B6JVP0</accession>
<comment type="function">
    <text evidence="1">Component of the cytosolic iron-sulfur (Fe-S) protein assembly (CIA) machinery required for the maturation of extramitochondrial Fe-S proteins. Part of an electron transfer chain functioning in an early step of cytosolic Fe-S biogenesis, facilitating the de novo assembly of a [4Fe-4S] cluster on the scaffold complex CFD1-NBP35. Electrons are transferred to DRE2 from NADPH via the FAD- and FMN-containing protein TAH18. TAH18-DRE2 are also required for the assembly of the diferric tyrosyl radical cofactor of ribonucleotide reductase (RNR), probably by providing electrons for reduction during radical cofactor maturation in the catalytic small subunit RNR2.</text>
</comment>
<comment type="cofactor">
    <cofactor evidence="1">
        <name>[2Fe-2S] cluster</name>
        <dbReference type="ChEBI" id="CHEBI:190135"/>
    </cofactor>
</comment>
<comment type="cofactor">
    <cofactor evidence="1">
        <name>[4Fe-4S] cluster</name>
        <dbReference type="ChEBI" id="CHEBI:49883"/>
    </cofactor>
</comment>
<comment type="subunit">
    <text evidence="1">Monomer. Interacts with TAH18. Interacts with MIA40.</text>
</comment>
<comment type="subcellular location">
    <subcellularLocation>
        <location evidence="1">Cytoplasm</location>
    </subcellularLocation>
    <subcellularLocation>
        <location evidence="1">Mitochondrion intermembrane space</location>
    </subcellularLocation>
</comment>
<comment type="domain">
    <text evidence="1">The C-terminal domain binds 2 Fe-S clusters but is otherwise mostly in an intrinsically disordered conformation.</text>
</comment>
<comment type="domain">
    <text evidence="1">The N-terminal domain has structural similarity with S-adenosyl-L-methionine-dependent methyltransferases, but does not bind S-adenosyl-L-methionine. It is required for correct assembly of the 2 Fe-S clusters.</text>
</comment>
<comment type="domain">
    <text evidence="1">The twin Cx2C motifs are involved in the recognition by the mitochondrial MIA40-ERV1 disulfide relay system. The formation of 2 disulfide bonds in the Cx2C motifs through dithiol/disulfide exchange reactions effectively traps the protein in the mitochondrial intermembrane space.</text>
</comment>
<comment type="similarity">
    <text evidence="1">Belongs to the anamorsin family.</text>
</comment>
<protein>
    <recommendedName>
        <fullName evidence="1">Fe-S cluster assembly protein dre2</fullName>
    </recommendedName>
    <alternativeName>
        <fullName evidence="1">Anamorsin homolog</fullName>
    </alternativeName>
</protein>
<keyword id="KW-0001">2Fe-2S</keyword>
<keyword id="KW-0004">4Fe-4S</keyword>
<keyword id="KW-0963">Cytoplasm</keyword>
<keyword id="KW-0408">Iron</keyword>
<keyword id="KW-0411">Iron-sulfur</keyword>
<keyword id="KW-0479">Metal-binding</keyword>
<keyword id="KW-0496">Mitochondrion</keyword>
<keyword id="KW-1185">Reference proteome</keyword>
<sequence>MTTTIVLASPNYAANESKFATSLAKFQANSTDASHQRDIHMIDRIAGNLASLTVNAYDRGLLFLDESTTLEEIKAILPKLFAAVHPGAALSVDGVFAKELADAFERESLLAGWMIESKGPFVLRRPAQVEAVPLKLSTKKSAGASVGVKLDFLFKKPEKQNTLSKNDVLKAAQEEEEGEDDLYDEDALVSDEETQLGKDVLAPPSTCSKPGKKKRCKNCTCGQREQDEAEAAAASAAAPKAVKLTDTMEIDFTELLKSKNAVSSCGSCYLGDAFRCSGCPYIGLPAFKPGEQVLISENRDKLSWMADDL</sequence>
<dbReference type="EMBL" id="KE651166">
    <property type="protein sequence ID" value="EEB05441.1"/>
    <property type="molecule type" value="Genomic_DNA"/>
</dbReference>
<dbReference type="RefSeq" id="XP_002171734.1">
    <property type="nucleotide sequence ID" value="XM_002171698.2"/>
</dbReference>
<dbReference type="STRING" id="402676.B6JVP0"/>
<dbReference type="EnsemblFungi" id="EEB05441">
    <property type="protein sequence ID" value="EEB05441"/>
    <property type="gene ID" value="SJAG_00455"/>
</dbReference>
<dbReference type="GeneID" id="7047953"/>
<dbReference type="JaponicusDB" id="SJAG_00455">
    <property type="gene designation" value="dre2"/>
</dbReference>
<dbReference type="VEuPathDB" id="FungiDB:SJAG_00455"/>
<dbReference type="eggNOG" id="KOG4020">
    <property type="taxonomic scope" value="Eukaryota"/>
</dbReference>
<dbReference type="HOGENOM" id="CLU_067152_1_0_1"/>
<dbReference type="OMA" id="DFVMPVT"/>
<dbReference type="OrthoDB" id="311633at2759"/>
<dbReference type="Proteomes" id="UP000001744">
    <property type="component" value="Unassembled WGS sequence"/>
</dbReference>
<dbReference type="GO" id="GO:0005737">
    <property type="term" value="C:cytoplasm"/>
    <property type="evidence" value="ECO:0000318"/>
    <property type="project" value="GO_Central"/>
</dbReference>
<dbReference type="GO" id="GO:0005758">
    <property type="term" value="C:mitochondrial intermembrane space"/>
    <property type="evidence" value="ECO:0007669"/>
    <property type="project" value="UniProtKB-SubCell"/>
</dbReference>
<dbReference type="GO" id="GO:0051537">
    <property type="term" value="F:2 iron, 2 sulfur cluster binding"/>
    <property type="evidence" value="ECO:0007669"/>
    <property type="project" value="UniProtKB-UniRule"/>
</dbReference>
<dbReference type="GO" id="GO:0051539">
    <property type="term" value="F:4 iron, 4 sulfur cluster binding"/>
    <property type="evidence" value="ECO:0007669"/>
    <property type="project" value="UniProtKB-KW"/>
</dbReference>
<dbReference type="GO" id="GO:0009055">
    <property type="term" value="F:electron transfer activity"/>
    <property type="evidence" value="ECO:0007669"/>
    <property type="project" value="UniProtKB-UniRule"/>
</dbReference>
<dbReference type="GO" id="GO:0046872">
    <property type="term" value="F:metal ion binding"/>
    <property type="evidence" value="ECO:0007669"/>
    <property type="project" value="UniProtKB-KW"/>
</dbReference>
<dbReference type="GO" id="GO:0016226">
    <property type="term" value="P:iron-sulfur cluster assembly"/>
    <property type="evidence" value="ECO:0000318"/>
    <property type="project" value="GO_Central"/>
</dbReference>
<dbReference type="HAMAP" id="MF_03115">
    <property type="entry name" value="Anamorsin"/>
    <property type="match status" value="1"/>
</dbReference>
<dbReference type="InterPro" id="IPR007785">
    <property type="entry name" value="Anamorsin"/>
</dbReference>
<dbReference type="InterPro" id="IPR046408">
    <property type="entry name" value="CIAPIN1"/>
</dbReference>
<dbReference type="InterPro" id="IPR031838">
    <property type="entry name" value="Dre2_N"/>
</dbReference>
<dbReference type="PANTHER" id="PTHR13273">
    <property type="entry name" value="ANAMORSIN"/>
    <property type="match status" value="1"/>
</dbReference>
<dbReference type="PANTHER" id="PTHR13273:SF14">
    <property type="entry name" value="ANAMORSIN"/>
    <property type="match status" value="1"/>
</dbReference>
<dbReference type="Pfam" id="PF05093">
    <property type="entry name" value="CIAPIN1"/>
    <property type="match status" value="1"/>
</dbReference>
<dbReference type="Pfam" id="PF16803">
    <property type="entry name" value="DRE2_N"/>
    <property type="match status" value="1"/>
</dbReference>